<gene>
    <name evidence="1" type="primary">rpsK</name>
    <name type="ordered locus">FTL_0259</name>
</gene>
<keyword id="KW-1185">Reference proteome</keyword>
<keyword id="KW-0687">Ribonucleoprotein</keyword>
<keyword id="KW-0689">Ribosomal protein</keyword>
<keyword id="KW-0694">RNA-binding</keyword>
<keyword id="KW-0699">rRNA-binding</keyword>
<name>RS11_FRATH</name>
<accession>Q2A5E7</accession>
<feature type="chain" id="PRO_0000294756" description="Small ribosomal subunit protein uS11">
    <location>
        <begin position="1"/>
        <end position="129"/>
    </location>
</feature>
<comment type="function">
    <text evidence="1">Located on the platform of the 30S subunit, it bridges several disparate RNA helices of the 16S rRNA. Forms part of the Shine-Dalgarno cleft in the 70S ribosome.</text>
</comment>
<comment type="subunit">
    <text evidence="1">Part of the 30S ribosomal subunit. Interacts with proteins S7 and S18. Binds to IF-3.</text>
</comment>
<comment type="similarity">
    <text evidence="1">Belongs to the universal ribosomal protein uS11 family.</text>
</comment>
<organism>
    <name type="scientific">Francisella tularensis subsp. holarctica (strain LVS)</name>
    <dbReference type="NCBI Taxonomy" id="376619"/>
    <lineage>
        <taxon>Bacteria</taxon>
        <taxon>Pseudomonadati</taxon>
        <taxon>Pseudomonadota</taxon>
        <taxon>Gammaproteobacteria</taxon>
        <taxon>Thiotrichales</taxon>
        <taxon>Francisellaceae</taxon>
        <taxon>Francisella</taxon>
    </lineage>
</organism>
<protein>
    <recommendedName>
        <fullName evidence="1">Small ribosomal subunit protein uS11</fullName>
    </recommendedName>
    <alternativeName>
        <fullName evidence="2">30S ribosomal protein S11</fullName>
    </alternativeName>
</protein>
<reference key="1">
    <citation type="submission" date="2006-03" db="EMBL/GenBank/DDBJ databases">
        <title>Complete genome sequence of Francisella tularensis LVS (Live Vaccine Strain).</title>
        <authorList>
            <person name="Chain P."/>
            <person name="Larimer F."/>
            <person name="Land M."/>
            <person name="Stilwagen S."/>
            <person name="Larsson P."/>
            <person name="Bearden S."/>
            <person name="Chu M."/>
            <person name="Oyston P."/>
            <person name="Forsman M."/>
            <person name="Andersson S."/>
            <person name="Lindler L."/>
            <person name="Titball R."/>
            <person name="Garcia E."/>
        </authorList>
    </citation>
    <scope>NUCLEOTIDE SEQUENCE [LARGE SCALE GENOMIC DNA]</scope>
    <source>
        <strain>LVS</strain>
    </source>
</reference>
<evidence type="ECO:0000255" key="1">
    <source>
        <dbReference type="HAMAP-Rule" id="MF_01310"/>
    </source>
</evidence>
<evidence type="ECO:0000305" key="2"/>
<proteinExistence type="inferred from homology"/>
<sequence>MAKSVRSSKKKVKRVVPDAVAHIYSSFNNTIVTITDRQGNALSWATSGGSGFRGSRKSTPFAAQVAAERAADMALEYGVKNVDVLVKGPGSGRDSAIRALNAKNLKVTSITDVTPLPHNGCRPPKKRRV</sequence>
<dbReference type="EMBL" id="AM233362">
    <property type="protein sequence ID" value="CAJ78700.1"/>
    <property type="molecule type" value="Genomic_DNA"/>
</dbReference>
<dbReference type="RefSeq" id="WP_003014376.1">
    <property type="nucleotide sequence ID" value="NZ_CP009694.1"/>
</dbReference>
<dbReference type="SMR" id="Q2A5E7"/>
<dbReference type="KEGG" id="ftl:FTL_0259"/>
<dbReference type="Proteomes" id="UP000001944">
    <property type="component" value="Chromosome"/>
</dbReference>
<dbReference type="GO" id="GO:1990904">
    <property type="term" value="C:ribonucleoprotein complex"/>
    <property type="evidence" value="ECO:0007669"/>
    <property type="project" value="UniProtKB-KW"/>
</dbReference>
<dbReference type="GO" id="GO:0005840">
    <property type="term" value="C:ribosome"/>
    <property type="evidence" value="ECO:0007669"/>
    <property type="project" value="UniProtKB-KW"/>
</dbReference>
<dbReference type="GO" id="GO:0019843">
    <property type="term" value="F:rRNA binding"/>
    <property type="evidence" value="ECO:0007669"/>
    <property type="project" value="UniProtKB-UniRule"/>
</dbReference>
<dbReference type="GO" id="GO:0003735">
    <property type="term" value="F:structural constituent of ribosome"/>
    <property type="evidence" value="ECO:0007669"/>
    <property type="project" value="InterPro"/>
</dbReference>
<dbReference type="GO" id="GO:0006412">
    <property type="term" value="P:translation"/>
    <property type="evidence" value="ECO:0007669"/>
    <property type="project" value="UniProtKB-UniRule"/>
</dbReference>
<dbReference type="FunFam" id="3.30.420.80:FF:000001">
    <property type="entry name" value="30S ribosomal protein S11"/>
    <property type="match status" value="1"/>
</dbReference>
<dbReference type="Gene3D" id="3.30.420.80">
    <property type="entry name" value="Ribosomal protein S11"/>
    <property type="match status" value="1"/>
</dbReference>
<dbReference type="HAMAP" id="MF_01310">
    <property type="entry name" value="Ribosomal_uS11"/>
    <property type="match status" value="1"/>
</dbReference>
<dbReference type="InterPro" id="IPR001971">
    <property type="entry name" value="Ribosomal_uS11"/>
</dbReference>
<dbReference type="InterPro" id="IPR019981">
    <property type="entry name" value="Ribosomal_uS11_bac-type"/>
</dbReference>
<dbReference type="InterPro" id="IPR018102">
    <property type="entry name" value="Ribosomal_uS11_CS"/>
</dbReference>
<dbReference type="InterPro" id="IPR036967">
    <property type="entry name" value="Ribosomal_uS11_sf"/>
</dbReference>
<dbReference type="NCBIfam" id="NF003698">
    <property type="entry name" value="PRK05309.1"/>
    <property type="match status" value="1"/>
</dbReference>
<dbReference type="NCBIfam" id="TIGR03632">
    <property type="entry name" value="uS11_bact"/>
    <property type="match status" value="1"/>
</dbReference>
<dbReference type="PANTHER" id="PTHR11759">
    <property type="entry name" value="40S RIBOSOMAL PROTEIN S14/30S RIBOSOMAL PROTEIN S11"/>
    <property type="match status" value="1"/>
</dbReference>
<dbReference type="Pfam" id="PF00411">
    <property type="entry name" value="Ribosomal_S11"/>
    <property type="match status" value="1"/>
</dbReference>
<dbReference type="PIRSF" id="PIRSF002131">
    <property type="entry name" value="Ribosomal_S11"/>
    <property type="match status" value="1"/>
</dbReference>
<dbReference type="SUPFAM" id="SSF53137">
    <property type="entry name" value="Translational machinery components"/>
    <property type="match status" value="1"/>
</dbReference>
<dbReference type="PROSITE" id="PS00054">
    <property type="entry name" value="RIBOSOMAL_S11"/>
    <property type="match status" value="1"/>
</dbReference>